<evidence type="ECO:0000250" key="1"/>
<evidence type="ECO:0000250" key="2">
    <source>
        <dbReference type="UniProtKB" id="Q67VC8"/>
    </source>
</evidence>
<evidence type="ECO:0000250" key="3">
    <source>
        <dbReference type="UniProtKB" id="Q9UGP5"/>
    </source>
</evidence>
<evidence type="ECO:0000255" key="4">
    <source>
        <dbReference type="PROSITE-ProRule" id="PRU00033"/>
    </source>
</evidence>
<evidence type="ECO:0000256" key="5">
    <source>
        <dbReference type="SAM" id="MobiDB-lite"/>
    </source>
</evidence>
<evidence type="ECO:0000269" key="6">
    <source>
    </source>
</evidence>
<evidence type="ECO:0000269" key="7">
    <source>
    </source>
</evidence>
<evidence type="ECO:0000269" key="8">
    <source>
    </source>
</evidence>
<evidence type="ECO:0000269" key="9">
    <source>
    </source>
</evidence>
<evidence type="ECO:0000305" key="10"/>
<evidence type="ECO:0000312" key="11">
    <source>
        <dbReference type="Araport" id="AT1G10520"/>
    </source>
</evidence>
<evidence type="ECO:0000312" key="12">
    <source>
        <dbReference type="EMBL" id="AAD39573.1"/>
    </source>
</evidence>
<dbReference type="EC" id="2.7.7.7" evidence="10"/>
<dbReference type="EC" id="4.2.99.-" evidence="10"/>
<dbReference type="EMBL" id="AJ289628">
    <property type="protein sequence ID" value="CAC21394.1"/>
    <property type="molecule type" value="mRNA"/>
</dbReference>
<dbReference type="EMBL" id="HQ009888">
    <property type="protein sequence ID" value="ADM33939.1"/>
    <property type="molecule type" value="mRNA"/>
</dbReference>
<dbReference type="EMBL" id="AC007067">
    <property type="protein sequence ID" value="AAD39573.1"/>
    <property type="status" value="ALT_SEQ"/>
    <property type="molecule type" value="Genomic_DNA"/>
</dbReference>
<dbReference type="EMBL" id="CP002684">
    <property type="protein sequence ID" value="AEE28588.1"/>
    <property type="molecule type" value="Genomic_DNA"/>
</dbReference>
<dbReference type="EMBL" id="DQ446242">
    <property type="protein sequence ID" value="ABE65612.1"/>
    <property type="molecule type" value="mRNA"/>
</dbReference>
<dbReference type="PIR" id="G86238">
    <property type="entry name" value="G86238"/>
</dbReference>
<dbReference type="SMR" id="Q9FNY4"/>
<dbReference type="FunCoup" id="Q9FNY4">
    <property type="interactions" value="2610"/>
</dbReference>
<dbReference type="STRING" id="3702.Q9FNY4"/>
<dbReference type="iPTMnet" id="Q9FNY4"/>
<dbReference type="PaxDb" id="3702-AT1G10520.1"/>
<dbReference type="ProteomicsDB" id="224290"/>
<dbReference type="EnsemblPlants" id="AT1G10520.1">
    <property type="protein sequence ID" value="AT1G10520.1"/>
    <property type="gene ID" value="AT1G10520"/>
</dbReference>
<dbReference type="GeneID" id="837592"/>
<dbReference type="Gramene" id="AT1G10520.1">
    <property type="protein sequence ID" value="AT1G10520.1"/>
    <property type="gene ID" value="AT1G10520"/>
</dbReference>
<dbReference type="KEGG" id="ath:AT1G10520"/>
<dbReference type="Araport" id="AT1G10520"/>
<dbReference type="TAIR" id="AT1G10520">
    <property type="gene designation" value="POL{LAMBDA}"/>
</dbReference>
<dbReference type="eggNOG" id="KOG2534">
    <property type="taxonomic scope" value="Eukaryota"/>
</dbReference>
<dbReference type="HOGENOM" id="CLU_008698_6_2_1"/>
<dbReference type="InParanoid" id="Q9FNY4"/>
<dbReference type="OMA" id="QEGWITH"/>
<dbReference type="OrthoDB" id="205514at2759"/>
<dbReference type="PhylomeDB" id="Q9FNY4"/>
<dbReference type="PRO" id="PR:Q9FNY4"/>
<dbReference type="Proteomes" id="UP000006548">
    <property type="component" value="Chromosome 1"/>
</dbReference>
<dbReference type="ExpressionAtlas" id="Q9FNY4">
    <property type="expression patterns" value="baseline and differential"/>
</dbReference>
<dbReference type="GO" id="GO:0005634">
    <property type="term" value="C:nucleus"/>
    <property type="evidence" value="ECO:0007669"/>
    <property type="project" value="UniProtKB-SubCell"/>
</dbReference>
<dbReference type="GO" id="GO:0051575">
    <property type="term" value="F:5'-deoxyribose-5-phosphate lyase activity"/>
    <property type="evidence" value="ECO:0007669"/>
    <property type="project" value="EnsemblPlants"/>
</dbReference>
<dbReference type="GO" id="GO:0003677">
    <property type="term" value="F:DNA binding"/>
    <property type="evidence" value="ECO:0007669"/>
    <property type="project" value="UniProtKB-KW"/>
</dbReference>
<dbReference type="GO" id="GO:0003887">
    <property type="term" value="F:DNA-directed DNA polymerase activity"/>
    <property type="evidence" value="ECO:0007669"/>
    <property type="project" value="UniProtKB-KW"/>
</dbReference>
<dbReference type="GO" id="GO:0030145">
    <property type="term" value="F:manganese ion binding"/>
    <property type="evidence" value="ECO:0007669"/>
    <property type="project" value="EnsemblPlants"/>
</dbReference>
<dbReference type="GO" id="GO:0097510">
    <property type="term" value="P:base-excision repair, AP site formation via deaminated base removal"/>
    <property type="evidence" value="ECO:0007669"/>
    <property type="project" value="EnsemblPlants"/>
</dbReference>
<dbReference type="GO" id="GO:0006260">
    <property type="term" value="P:DNA replication"/>
    <property type="evidence" value="ECO:0007669"/>
    <property type="project" value="UniProtKB-KW"/>
</dbReference>
<dbReference type="GO" id="GO:0006302">
    <property type="term" value="P:double-strand break repair"/>
    <property type="evidence" value="ECO:0000315"/>
    <property type="project" value="TAIR"/>
</dbReference>
<dbReference type="GO" id="GO:0006303">
    <property type="term" value="P:double-strand break repair via nonhomologous end joining"/>
    <property type="evidence" value="ECO:0000315"/>
    <property type="project" value="TAIR"/>
</dbReference>
<dbReference type="GO" id="GO:0006289">
    <property type="term" value="P:nucleotide-excision repair"/>
    <property type="evidence" value="ECO:0000315"/>
    <property type="project" value="TAIR"/>
</dbReference>
<dbReference type="GO" id="GO:0010224">
    <property type="term" value="P:response to UV-B"/>
    <property type="evidence" value="ECO:0000270"/>
    <property type="project" value="TAIR"/>
</dbReference>
<dbReference type="CDD" id="cd00141">
    <property type="entry name" value="NT_POLXc"/>
    <property type="match status" value="1"/>
</dbReference>
<dbReference type="FunFam" id="1.10.150.110:FF:000006">
    <property type="entry name" value="DNA polymerase"/>
    <property type="match status" value="1"/>
</dbReference>
<dbReference type="FunFam" id="3.30.210.10:FF:000006">
    <property type="entry name" value="DNA polymerase"/>
    <property type="match status" value="1"/>
</dbReference>
<dbReference type="FunFam" id="3.30.460.10:FF:000029">
    <property type="entry name" value="DNA polymerase"/>
    <property type="match status" value="1"/>
</dbReference>
<dbReference type="FunFam" id="3.40.50.10190:FF:000031">
    <property type="entry name" value="DNA polymerase"/>
    <property type="match status" value="1"/>
</dbReference>
<dbReference type="FunFam" id="1.10.150.20:FF:000010">
    <property type="entry name" value="DNA polymerase lambda"/>
    <property type="match status" value="1"/>
</dbReference>
<dbReference type="Gene3D" id="1.10.150.20">
    <property type="entry name" value="5' to 3' exonuclease, C-terminal subdomain"/>
    <property type="match status" value="1"/>
</dbReference>
<dbReference type="Gene3D" id="3.30.460.10">
    <property type="entry name" value="Beta Polymerase, domain 2"/>
    <property type="match status" value="1"/>
</dbReference>
<dbReference type="Gene3D" id="3.40.50.10190">
    <property type="entry name" value="BRCT domain"/>
    <property type="match status" value="1"/>
</dbReference>
<dbReference type="Gene3D" id="1.10.150.110">
    <property type="entry name" value="DNA polymerase beta, N-terminal domain-like"/>
    <property type="match status" value="1"/>
</dbReference>
<dbReference type="Gene3D" id="3.30.210.10">
    <property type="entry name" value="DNA polymerase, thumb domain"/>
    <property type="match status" value="1"/>
</dbReference>
<dbReference type="InterPro" id="IPR001357">
    <property type="entry name" value="BRCT_dom"/>
</dbReference>
<dbReference type="InterPro" id="IPR036420">
    <property type="entry name" value="BRCT_dom_sf"/>
</dbReference>
<dbReference type="InterPro" id="IPR002054">
    <property type="entry name" value="DNA-dir_DNA_pol_X"/>
</dbReference>
<dbReference type="InterPro" id="IPR019843">
    <property type="entry name" value="DNA_pol-X_BS"/>
</dbReference>
<dbReference type="InterPro" id="IPR010996">
    <property type="entry name" value="DNA_pol_b-like_N"/>
</dbReference>
<dbReference type="InterPro" id="IPR028207">
    <property type="entry name" value="DNA_pol_B_palm_palm"/>
</dbReference>
<dbReference type="InterPro" id="IPR018944">
    <property type="entry name" value="DNA_pol_lambd_fingers_domain"/>
</dbReference>
<dbReference type="InterPro" id="IPR027421">
    <property type="entry name" value="DNA_pol_lamdba_lyase_dom_sf"/>
</dbReference>
<dbReference type="InterPro" id="IPR037160">
    <property type="entry name" value="DNA_Pol_thumb_sf"/>
</dbReference>
<dbReference type="InterPro" id="IPR022312">
    <property type="entry name" value="DNA_pol_X"/>
</dbReference>
<dbReference type="InterPro" id="IPR002008">
    <property type="entry name" value="DNA_pol_X_beta-like"/>
</dbReference>
<dbReference type="InterPro" id="IPR043519">
    <property type="entry name" value="NT_sf"/>
</dbReference>
<dbReference type="InterPro" id="IPR029398">
    <property type="entry name" value="PolB_thumb"/>
</dbReference>
<dbReference type="PANTHER" id="PTHR11276:SF41">
    <property type="entry name" value="DNA POLYMERASE LAMBDA"/>
    <property type="match status" value="1"/>
</dbReference>
<dbReference type="PANTHER" id="PTHR11276">
    <property type="entry name" value="DNA POLYMERASE TYPE-X FAMILY MEMBER"/>
    <property type="match status" value="1"/>
</dbReference>
<dbReference type="Pfam" id="PF14792">
    <property type="entry name" value="DNA_pol_B_palm"/>
    <property type="match status" value="1"/>
</dbReference>
<dbReference type="Pfam" id="PF14791">
    <property type="entry name" value="DNA_pol_B_thumb"/>
    <property type="match status" value="1"/>
</dbReference>
<dbReference type="Pfam" id="PF10391">
    <property type="entry name" value="DNA_pol_lambd_f"/>
    <property type="match status" value="1"/>
</dbReference>
<dbReference type="Pfam" id="PF14716">
    <property type="entry name" value="HHH_8"/>
    <property type="match status" value="1"/>
</dbReference>
<dbReference type="PRINTS" id="PR00869">
    <property type="entry name" value="DNAPOLX"/>
</dbReference>
<dbReference type="PRINTS" id="PR00870">
    <property type="entry name" value="DNAPOLXBETA"/>
</dbReference>
<dbReference type="SMART" id="SM00483">
    <property type="entry name" value="POLXc"/>
    <property type="match status" value="1"/>
</dbReference>
<dbReference type="SUPFAM" id="SSF52113">
    <property type="entry name" value="BRCT domain"/>
    <property type="match status" value="1"/>
</dbReference>
<dbReference type="SUPFAM" id="SSF47802">
    <property type="entry name" value="DNA polymerase beta, N-terminal domain-like"/>
    <property type="match status" value="1"/>
</dbReference>
<dbReference type="SUPFAM" id="SSF81301">
    <property type="entry name" value="Nucleotidyltransferase"/>
    <property type="match status" value="1"/>
</dbReference>
<dbReference type="SUPFAM" id="SSF81585">
    <property type="entry name" value="PsbU/PolX domain-like"/>
    <property type="match status" value="1"/>
</dbReference>
<dbReference type="PROSITE" id="PS50172">
    <property type="entry name" value="BRCT"/>
    <property type="match status" value="1"/>
</dbReference>
<dbReference type="PROSITE" id="PS00522">
    <property type="entry name" value="DNA_POLYMERASE_X"/>
    <property type="match status" value="1"/>
</dbReference>
<name>DPOLL_ARATH</name>
<reference key="1">
    <citation type="journal article" date="2000" name="J. Mol. Biol.">
        <title>DNA polymerase lambda (Pol lambda), a novel eukaryotic DNA polymerase with a potential role in meiosis.</title>
        <authorList>
            <person name="Garcia-Diaz M."/>
            <person name="Dominguez O."/>
            <person name="Lopez-Fernandez L.A."/>
            <person name="Lain de Lera T."/>
            <person name="Saniger M.L."/>
            <person name="Ruiz J.F."/>
            <person name="Parraga M."/>
            <person name="Garcia M.J."/>
            <person name="Kirchhoff T."/>
            <person name="del Mazo J."/>
            <person name="Bernad A."/>
            <person name="Blanco L."/>
        </authorList>
    </citation>
    <scope>NUCLEOTIDE SEQUENCE [MRNA]</scope>
</reference>
<reference key="2">
    <citation type="submission" date="2010-08" db="EMBL/GenBank/DDBJ databases">
        <title>Arabidopsis thaliana DNA pol lambda (Poll) mRNA.</title>
        <authorList>
            <person name="Roy S."/>
            <person name="Roy Choudhury S."/>
            <person name="Singh S.K."/>
            <person name="Das K.P."/>
        </authorList>
    </citation>
    <scope>NUCLEOTIDE SEQUENCE [MRNA]</scope>
</reference>
<reference key="3">
    <citation type="journal article" date="2000" name="Nature">
        <title>Sequence and analysis of chromosome 1 of the plant Arabidopsis thaliana.</title>
        <authorList>
            <person name="Theologis A."/>
            <person name="Ecker J.R."/>
            <person name="Palm C.J."/>
            <person name="Federspiel N.A."/>
            <person name="Kaul S."/>
            <person name="White O."/>
            <person name="Alonso J."/>
            <person name="Altafi H."/>
            <person name="Araujo R."/>
            <person name="Bowman C.L."/>
            <person name="Brooks S.Y."/>
            <person name="Buehler E."/>
            <person name="Chan A."/>
            <person name="Chao Q."/>
            <person name="Chen H."/>
            <person name="Cheuk R.F."/>
            <person name="Chin C.W."/>
            <person name="Chung M.K."/>
            <person name="Conn L."/>
            <person name="Conway A.B."/>
            <person name="Conway A.R."/>
            <person name="Creasy T.H."/>
            <person name="Dewar K."/>
            <person name="Dunn P."/>
            <person name="Etgu P."/>
            <person name="Feldblyum T.V."/>
            <person name="Feng J.-D."/>
            <person name="Fong B."/>
            <person name="Fujii C.Y."/>
            <person name="Gill J.E."/>
            <person name="Goldsmith A.D."/>
            <person name="Haas B."/>
            <person name="Hansen N.F."/>
            <person name="Hughes B."/>
            <person name="Huizar L."/>
            <person name="Hunter J.L."/>
            <person name="Jenkins J."/>
            <person name="Johnson-Hopson C."/>
            <person name="Khan S."/>
            <person name="Khaykin E."/>
            <person name="Kim C.J."/>
            <person name="Koo H.L."/>
            <person name="Kremenetskaia I."/>
            <person name="Kurtz D.B."/>
            <person name="Kwan A."/>
            <person name="Lam B."/>
            <person name="Langin-Hooper S."/>
            <person name="Lee A."/>
            <person name="Lee J.M."/>
            <person name="Lenz C.A."/>
            <person name="Li J.H."/>
            <person name="Li Y.-P."/>
            <person name="Lin X."/>
            <person name="Liu S.X."/>
            <person name="Liu Z.A."/>
            <person name="Luros J.S."/>
            <person name="Maiti R."/>
            <person name="Marziali A."/>
            <person name="Militscher J."/>
            <person name="Miranda M."/>
            <person name="Nguyen M."/>
            <person name="Nierman W.C."/>
            <person name="Osborne B.I."/>
            <person name="Pai G."/>
            <person name="Peterson J."/>
            <person name="Pham P.K."/>
            <person name="Rizzo M."/>
            <person name="Rooney T."/>
            <person name="Rowley D."/>
            <person name="Sakano H."/>
            <person name="Salzberg S.L."/>
            <person name="Schwartz J.R."/>
            <person name="Shinn P."/>
            <person name="Southwick A.M."/>
            <person name="Sun H."/>
            <person name="Tallon L.J."/>
            <person name="Tambunga G."/>
            <person name="Toriumi M.J."/>
            <person name="Town C.D."/>
            <person name="Utterback T."/>
            <person name="Van Aken S."/>
            <person name="Vaysberg M."/>
            <person name="Vysotskaia V.S."/>
            <person name="Walker M."/>
            <person name="Wu D."/>
            <person name="Yu G."/>
            <person name="Fraser C.M."/>
            <person name="Venter J.C."/>
            <person name="Davis R.W."/>
        </authorList>
    </citation>
    <scope>NUCLEOTIDE SEQUENCE [LARGE SCALE GENOMIC DNA]</scope>
    <source>
        <strain>cv. Columbia</strain>
    </source>
</reference>
<reference key="4">
    <citation type="journal article" date="2017" name="Plant J.">
        <title>Araport11: a complete reannotation of the Arabidopsis thaliana reference genome.</title>
        <authorList>
            <person name="Cheng C.Y."/>
            <person name="Krishnakumar V."/>
            <person name="Chan A.P."/>
            <person name="Thibaud-Nissen F."/>
            <person name="Schobel S."/>
            <person name="Town C.D."/>
        </authorList>
    </citation>
    <scope>GENOME REANNOTATION</scope>
    <source>
        <strain>cv. Columbia</strain>
    </source>
</reference>
<reference key="5">
    <citation type="journal article" date="2006" name="Plant Biotechnol. J.">
        <title>Simultaneous high-throughput recombinational cloning of open reading frames in closed and open configurations.</title>
        <authorList>
            <person name="Underwood B.A."/>
            <person name="Vanderhaeghen R."/>
            <person name="Whitford R."/>
            <person name="Town C.D."/>
            <person name="Hilson P."/>
        </authorList>
    </citation>
    <scope>NUCLEOTIDE SEQUENCE [LARGE SCALE MRNA]</scope>
    <source>
        <strain>cv. Columbia</strain>
    </source>
</reference>
<reference key="6">
    <citation type="journal article" date="2009" name="J. Proteomics">
        <title>Phosphoproteomic analysis of nuclei-enriched fractions from Arabidopsis thaliana.</title>
        <authorList>
            <person name="Jones A.M.E."/>
            <person name="MacLean D."/>
            <person name="Studholme D.J."/>
            <person name="Serna-Sanz A."/>
            <person name="Andreasson E."/>
            <person name="Rathjen J.P."/>
            <person name="Peck S.C."/>
        </authorList>
    </citation>
    <scope>IDENTIFICATION BY MASS SPECTROMETRY [LARGE SCALE ANALYSIS]</scope>
    <source>
        <strain>cv. Columbia</strain>
    </source>
</reference>
<reference key="7">
    <citation type="journal article" date="2011" name="DNA Repair">
        <title>Breadth by depth: expanding our understanding of the repair of transposon-induced DNA double strand breaks via deep-sequencing.</title>
        <authorList>
            <person name="Huefner N.D."/>
            <person name="Mizuno Y."/>
            <person name="Weil C.F."/>
            <person name="Korf I."/>
            <person name="Britt A.B."/>
        </authorList>
    </citation>
    <scope>FUNCTION</scope>
</reference>
<reference key="8">
    <citation type="journal article" date="2011" name="Plant Cell Physiol.">
        <title>AtPollambda, a homolog of mammalian DNA polymerase lambda in Arabidopsis thaliana, is involved in the repair of UV-B induced DNA damage through the dark repair pathway.</title>
        <authorList>
            <person name="Roy S."/>
            <person name="Choudhury S.R."/>
            <person name="Singh S.K."/>
            <person name="Das K.P."/>
        </authorList>
    </citation>
    <scope>FUNCTION</scope>
    <scope>INDUCTION BY UV-B</scope>
</reference>
<reference key="9">
    <citation type="journal article" date="2013" name="Plant Physiol.">
        <title>Involvement of AtPollambda in the repair of high salt- and DNA cross-linking agent-induced double strand breaks in Arabidopsis.</title>
        <authorList>
            <person name="Roy S."/>
            <person name="Choudhury S.R."/>
            <person name="Sengupta D.N."/>
            <person name="Das K.P."/>
        </authorList>
    </citation>
    <scope>FUNCTION</scope>
    <scope>INTERACTION WITH XRCC4 AND LIG4</scope>
</reference>
<reference key="10">
    <citation type="journal article" date="2015" name="PLoS ONE">
        <title>Understanding the physical and molecular basis of stability of Arabidopsis DNA Pol lambda under UV-B and high NaCl stress.</title>
        <authorList>
            <person name="Roy S."/>
            <person name="Banerjee V."/>
            <person name="Das K.P."/>
        </authorList>
    </citation>
    <scope>INTERACTION WITH HSP90-1</scope>
</reference>
<keyword id="KW-0227">DNA damage</keyword>
<keyword id="KW-0234">DNA repair</keyword>
<keyword id="KW-0235">DNA replication</keyword>
<keyword id="KW-0237">DNA synthesis</keyword>
<keyword id="KW-0238">DNA-binding</keyword>
<keyword id="KW-0239">DNA-directed DNA polymerase</keyword>
<keyword id="KW-0456">Lyase</keyword>
<keyword id="KW-0464">Manganese</keyword>
<keyword id="KW-0479">Metal-binding</keyword>
<keyword id="KW-0548">Nucleotidyltransferase</keyword>
<keyword id="KW-0539">Nucleus</keyword>
<keyword id="KW-1185">Reference proteome</keyword>
<keyword id="KW-0808">Transferase</keyword>
<feature type="chain" id="PRO_0000438212" description="DNA polymerase lambda">
    <location>
        <begin position="1"/>
        <end position="529"/>
    </location>
</feature>
<feature type="domain" description="BRCT" evidence="4">
    <location>
        <begin position="14"/>
        <end position="109"/>
    </location>
</feature>
<feature type="region of interest" description="Disordered" evidence="5">
    <location>
        <begin position="119"/>
        <end position="199"/>
    </location>
</feature>
<feature type="region of interest" description="DNA-binding" evidence="3">
    <location>
        <begin position="213"/>
        <end position="227"/>
    </location>
</feature>
<feature type="region of interest" description="DNA-binding" evidence="3">
    <location>
        <begin position="295"/>
        <end position="298"/>
    </location>
</feature>
<feature type="region of interest" description="Involved in primer binding" evidence="1">
    <location>
        <begin position="370"/>
        <end position="379"/>
    </location>
</feature>
<feature type="region of interest" description="DNA-binding" evidence="3">
    <location>
        <begin position="418"/>
        <end position="459"/>
    </location>
</feature>
<feature type="compositionally biased region" description="Polar residues" evidence="5">
    <location>
        <begin position="153"/>
        <end position="175"/>
    </location>
</feature>
<feature type="compositionally biased region" description="Low complexity" evidence="5">
    <location>
        <begin position="182"/>
        <end position="193"/>
    </location>
</feature>
<feature type="active site" evidence="10">
    <location>
        <position position="260"/>
    </location>
</feature>
<feature type="binding site" evidence="3">
    <location>
        <position position="336"/>
    </location>
    <ligand>
        <name>dCTP</name>
        <dbReference type="ChEBI" id="CHEBI:61481"/>
    </ligand>
</feature>
<feature type="binding site" evidence="3">
    <location>
        <begin position="367"/>
        <end position="370"/>
    </location>
    <ligand>
        <name>dCTP</name>
        <dbReference type="ChEBI" id="CHEBI:61481"/>
    </ligand>
</feature>
<feature type="binding site" evidence="3">
    <location>
        <begin position="376"/>
        <end position="379"/>
    </location>
    <ligand>
        <name>dCTP</name>
        <dbReference type="ChEBI" id="CHEBI:61481"/>
    </ligand>
</feature>
<feature type="binding site" evidence="3">
    <location>
        <position position="377"/>
    </location>
    <ligand>
        <name>Mn(2+)</name>
        <dbReference type="ChEBI" id="CHEBI:29035"/>
    </ligand>
</feature>
<feature type="binding site" evidence="3">
    <location>
        <position position="379"/>
    </location>
    <ligand>
        <name>Mn(2+)</name>
        <dbReference type="ChEBI" id="CHEBI:29035"/>
    </ligand>
</feature>
<feature type="binding site" evidence="3">
    <location>
        <position position="444"/>
    </location>
    <ligand>
        <name>Mn(2+)</name>
        <dbReference type="ChEBI" id="CHEBI:29035"/>
    </ligand>
</feature>
<feature type="binding site" evidence="3">
    <location>
        <position position="467"/>
    </location>
    <ligand>
        <name>dCTP</name>
        <dbReference type="ChEBI" id="CHEBI:61481"/>
    </ligand>
</feature>
<accession>Q9FNY4</accession>
<accession>Q9XIK1</accession>
<proteinExistence type="evidence at protein level"/>
<gene>
    <name evidence="10" type="primary">POLL</name>
    <name evidence="11" type="ordered locus">At1g10520</name>
    <name evidence="12" type="ORF">T10O24.13</name>
</gene>
<protein>
    <recommendedName>
        <fullName evidence="10">DNA polymerase lambda</fullName>
        <shortName evidence="10">Pol Lambda</shortName>
        <ecNumber evidence="10">2.7.7.7</ecNumber>
        <ecNumber evidence="10">4.2.99.-</ecNumber>
    </recommendedName>
</protein>
<sequence length="529" mass="59588">MAAKRGRNRSPSPDPEGMFAGMVVFMVEIGVQRRRLQIWKQKLVQMGAVIEEDRVTKKVTHVLAMNLEALLHKFGKERLSHFTARLMLYQWLEDSLTSGEKANEDLYVLKIDSEEVDKPKKSLPAISGSEDQSSPQKRTRYSPDAGDFKGVESHSNTQGSPDSPTSCSVPSTSASPGEGIAETPTSPQSESTSVYKPPDLNRNITEIFGKLINIYRALGEDRRSFSYYKAIPVIEKFPTRIESVDQLKHLPGIGKAMRDHIQEIVTTGKLSKLEHFETDEKVRTISLFGEVWGVGPATALKLYEKGHRTLEDLKNEDSLTHAQKLGLKYFDDIKTRIPRQEVQEMEQLLQRVGEETLPGVNIVCGGSYRRGKATCGDLDIVVTHPDGQSHKGFLTKFVKRLKEMNFLREDLIFSTHSEEGTDSGVDTYFGLCTYPGQELRRRIDFKVYPRDIYSFGLIAWTGNDVLNRRLRLLAESKGYRLDDTGLFPATHSSSGNRGARGTASLKLSTEKQVFDFLGFPWLEPHERNL</sequence>
<organism>
    <name type="scientific">Arabidopsis thaliana</name>
    <name type="common">Mouse-ear cress</name>
    <dbReference type="NCBI Taxonomy" id="3702"/>
    <lineage>
        <taxon>Eukaryota</taxon>
        <taxon>Viridiplantae</taxon>
        <taxon>Streptophyta</taxon>
        <taxon>Embryophyta</taxon>
        <taxon>Tracheophyta</taxon>
        <taxon>Spermatophyta</taxon>
        <taxon>Magnoliopsida</taxon>
        <taxon>eudicotyledons</taxon>
        <taxon>Gunneridae</taxon>
        <taxon>Pentapetalae</taxon>
        <taxon>rosids</taxon>
        <taxon>malvids</taxon>
        <taxon>Brassicales</taxon>
        <taxon>Brassicaceae</taxon>
        <taxon>Camelineae</taxon>
        <taxon>Arabidopsis</taxon>
    </lineage>
</organism>
<comment type="function">
    <text evidence="2 6 7">Repair polymerase involved in base excision repair (BER) and responsible for repair of lesions that give rise to abasic (AP) sites in DNA. Has both DNA polymerase and terminal transferase activities. Has a 5'-deoxyribose-5-phosphate lyase (dRP lyase) activity (By similarity). Involved in the repair of transposon-induced DNA double strand breaks (DSBs) (PubMed:21889425). Involved in repair of UV-B-mediated DNA damage during seedling development through an excision repair mechanism (PubMed:21227935). Involved the repair of DSBs induced by high salinity and DNA cross-linking agent. Functions via the DNA non-homologous end joining (NHEJ) pathway.</text>
</comment>
<comment type="catalytic activity">
    <reaction>
        <text>DNA(n) + a 2'-deoxyribonucleoside 5'-triphosphate = DNA(n+1) + diphosphate</text>
        <dbReference type="Rhea" id="RHEA:22508"/>
        <dbReference type="Rhea" id="RHEA-COMP:17339"/>
        <dbReference type="Rhea" id="RHEA-COMP:17340"/>
        <dbReference type="ChEBI" id="CHEBI:33019"/>
        <dbReference type="ChEBI" id="CHEBI:61560"/>
        <dbReference type="ChEBI" id="CHEBI:173112"/>
        <dbReference type="EC" id="2.7.7.7"/>
    </reaction>
</comment>
<comment type="cofactor">
    <cofactor>
        <name>Mn(2+)</name>
        <dbReference type="ChEBI" id="CHEBI:29035"/>
    </cofactor>
</comment>
<comment type="subunit">
    <text evidence="8 9">Interacts with the DNA repair proteins XRCC4 and LIG4 (PubMed:23660835). Interacts with HSP90-1 (PubMed:26230318).</text>
</comment>
<comment type="subcellular location">
    <subcellularLocation>
        <location evidence="10">Nucleus</location>
    </subcellularLocation>
</comment>
<comment type="induction">
    <text evidence="6">Induced by UV-B.</text>
</comment>
<comment type="similarity">
    <text evidence="10">Belongs to the DNA polymerase type-X family.</text>
</comment>
<comment type="sequence caution" evidence="10">
    <conflict type="erroneous gene model prediction">
        <sequence resource="EMBL-CDS" id="AAD39573"/>
    </conflict>
</comment>